<evidence type="ECO:0000250" key="1">
    <source>
        <dbReference type="UniProtKB" id="P68363"/>
    </source>
</evidence>
<evidence type="ECO:0000250" key="2">
    <source>
        <dbReference type="UniProtKB" id="Q13509"/>
    </source>
</evidence>
<evidence type="ECO:0000256" key="3">
    <source>
        <dbReference type="SAM" id="MobiDB-lite"/>
    </source>
</evidence>
<evidence type="ECO:0000305" key="4"/>
<gene>
    <name type="primary">TUBB</name>
</gene>
<feature type="chain" id="PRO_0000048334" description="Tubulin beta chain">
    <location>
        <begin position="1"/>
        <end position="443"/>
    </location>
</feature>
<feature type="region of interest" description="Disordered" evidence="3">
    <location>
        <begin position="424"/>
        <end position="443"/>
    </location>
</feature>
<feature type="compositionally biased region" description="Acidic residues" evidence="3">
    <location>
        <begin position="429"/>
        <end position="443"/>
    </location>
</feature>
<feature type="binding site" evidence="2">
    <location>
        <position position="11"/>
    </location>
    <ligand>
        <name>GTP</name>
        <dbReference type="ChEBI" id="CHEBI:37565"/>
    </ligand>
</feature>
<feature type="binding site" evidence="1">
    <location>
        <position position="69"/>
    </location>
    <ligand>
        <name>GTP</name>
        <dbReference type="ChEBI" id="CHEBI:37565"/>
    </ligand>
</feature>
<feature type="binding site" evidence="1">
    <location>
        <position position="69"/>
    </location>
    <ligand>
        <name>Mg(2+)</name>
        <dbReference type="ChEBI" id="CHEBI:18420"/>
    </ligand>
</feature>
<feature type="binding site" evidence="2">
    <location>
        <position position="138"/>
    </location>
    <ligand>
        <name>GTP</name>
        <dbReference type="ChEBI" id="CHEBI:37565"/>
    </ligand>
</feature>
<feature type="binding site" evidence="2">
    <location>
        <position position="142"/>
    </location>
    <ligand>
        <name>GTP</name>
        <dbReference type="ChEBI" id="CHEBI:37565"/>
    </ligand>
</feature>
<feature type="binding site" evidence="2">
    <location>
        <position position="143"/>
    </location>
    <ligand>
        <name>GTP</name>
        <dbReference type="ChEBI" id="CHEBI:37565"/>
    </ligand>
</feature>
<feature type="binding site" evidence="2">
    <location>
        <position position="144"/>
    </location>
    <ligand>
        <name>GTP</name>
        <dbReference type="ChEBI" id="CHEBI:37565"/>
    </ligand>
</feature>
<feature type="binding site" evidence="2">
    <location>
        <position position="204"/>
    </location>
    <ligand>
        <name>GTP</name>
        <dbReference type="ChEBI" id="CHEBI:37565"/>
    </ligand>
</feature>
<feature type="binding site" evidence="2">
    <location>
        <position position="226"/>
    </location>
    <ligand>
        <name>GTP</name>
        <dbReference type="ChEBI" id="CHEBI:37565"/>
    </ligand>
</feature>
<sequence length="443" mass="49605">MREIVHIQGGQCGNQIGAKFWEVVSDEHGVDPTGTYHGDSDLQLERINVYFNEATGGRYVPRAILMDLEPGTMDSVRSGPYGQIFRPDNFVFGQTGAGNNWAKGHYTEGAELIDSVLDVVRKEAESCDCLQGFQVCHSLGGGTGSGMGTLLISKIREEYPDRMMLTFSVVPSPKVSDTVVEPYNATLSVHQLVENADECMVLDNEALYDICFRTLKLTTPTFGDLNHLISAVMSGITCCLRFPGQLNADLRKLAVNLIPFPRLHFFMVGFTPLTSRGSQQYRALTVPELTQQMWDAKNMMCAADPRHGRYLTASALFRGRMSTKEVDEQMLNVQNKNSSYFVEWIPNNVKSSVCDIPPKGLKMSATFIGNSTAIQEMFKRVSEQFTAMFRRKAFLHWYTGEGMDEMEFTEAESNMNDLVSEYQQYQDASAEEEGEFEGEEEEA</sequence>
<reference key="1">
    <citation type="journal article" date="1997" name="Proc. Natl. Acad. Sci. U.S.A.">
        <title>Rapid evolution of sex-related genes in Chlamydomonas.</title>
        <authorList>
            <person name="Ferris P.J."/>
            <person name="Pavlovic C."/>
            <person name="Fabry S."/>
            <person name="Goodenough U.W."/>
        </authorList>
    </citation>
    <scope>NUCLEOTIDE SEQUENCE [GENOMIC DNA]</scope>
    <source>
        <strain>CC-1870</strain>
    </source>
</reference>
<name>TBB_CHLIN</name>
<dbReference type="EMBL" id="AF001379">
    <property type="protein sequence ID" value="AAB60936.1"/>
    <property type="molecule type" value="Genomic_DNA"/>
</dbReference>
<dbReference type="SMR" id="O04386"/>
<dbReference type="OrthoDB" id="563915at2759"/>
<dbReference type="GO" id="GO:0005737">
    <property type="term" value="C:cytoplasm"/>
    <property type="evidence" value="ECO:0007669"/>
    <property type="project" value="UniProtKB-KW"/>
</dbReference>
<dbReference type="GO" id="GO:0005874">
    <property type="term" value="C:microtubule"/>
    <property type="evidence" value="ECO:0007669"/>
    <property type="project" value="UniProtKB-KW"/>
</dbReference>
<dbReference type="GO" id="GO:0005525">
    <property type="term" value="F:GTP binding"/>
    <property type="evidence" value="ECO:0007669"/>
    <property type="project" value="UniProtKB-KW"/>
</dbReference>
<dbReference type="GO" id="GO:0003924">
    <property type="term" value="F:GTPase activity"/>
    <property type="evidence" value="ECO:0007669"/>
    <property type="project" value="InterPro"/>
</dbReference>
<dbReference type="GO" id="GO:0046872">
    <property type="term" value="F:metal ion binding"/>
    <property type="evidence" value="ECO:0007669"/>
    <property type="project" value="UniProtKB-KW"/>
</dbReference>
<dbReference type="GO" id="GO:0005200">
    <property type="term" value="F:structural constituent of cytoskeleton"/>
    <property type="evidence" value="ECO:0007669"/>
    <property type="project" value="InterPro"/>
</dbReference>
<dbReference type="GO" id="GO:0007017">
    <property type="term" value="P:microtubule-based process"/>
    <property type="evidence" value="ECO:0007669"/>
    <property type="project" value="InterPro"/>
</dbReference>
<dbReference type="CDD" id="cd02187">
    <property type="entry name" value="beta_tubulin"/>
    <property type="match status" value="1"/>
</dbReference>
<dbReference type="FunFam" id="1.10.287.600:FF:000006">
    <property type="entry name" value="Tubulin beta chain"/>
    <property type="match status" value="1"/>
</dbReference>
<dbReference type="FunFam" id="3.30.1330.20:FF:000002">
    <property type="entry name" value="Tubulin beta chain"/>
    <property type="match status" value="1"/>
</dbReference>
<dbReference type="FunFam" id="3.40.50.1440:FF:000005">
    <property type="entry name" value="Tubulin beta chain"/>
    <property type="match status" value="1"/>
</dbReference>
<dbReference type="Gene3D" id="1.10.287.600">
    <property type="entry name" value="Helix hairpin bin"/>
    <property type="match status" value="1"/>
</dbReference>
<dbReference type="Gene3D" id="3.30.1330.20">
    <property type="entry name" value="Tubulin/FtsZ, C-terminal domain"/>
    <property type="match status" value="1"/>
</dbReference>
<dbReference type="Gene3D" id="3.40.50.1440">
    <property type="entry name" value="Tubulin/FtsZ, GTPase domain"/>
    <property type="match status" value="1"/>
</dbReference>
<dbReference type="InterPro" id="IPR013838">
    <property type="entry name" value="Beta-tubulin_BS"/>
</dbReference>
<dbReference type="InterPro" id="IPR002453">
    <property type="entry name" value="Beta_tubulin"/>
</dbReference>
<dbReference type="InterPro" id="IPR008280">
    <property type="entry name" value="Tub_FtsZ_C"/>
</dbReference>
<dbReference type="InterPro" id="IPR000217">
    <property type="entry name" value="Tubulin"/>
</dbReference>
<dbReference type="InterPro" id="IPR037103">
    <property type="entry name" value="Tubulin/FtsZ-like_C"/>
</dbReference>
<dbReference type="InterPro" id="IPR018316">
    <property type="entry name" value="Tubulin/FtsZ_2-layer-sand-dom"/>
</dbReference>
<dbReference type="InterPro" id="IPR036525">
    <property type="entry name" value="Tubulin/FtsZ_GTPase_sf"/>
</dbReference>
<dbReference type="InterPro" id="IPR023123">
    <property type="entry name" value="Tubulin_C"/>
</dbReference>
<dbReference type="InterPro" id="IPR017975">
    <property type="entry name" value="Tubulin_CS"/>
</dbReference>
<dbReference type="InterPro" id="IPR003008">
    <property type="entry name" value="Tubulin_FtsZ_GTPase"/>
</dbReference>
<dbReference type="PANTHER" id="PTHR11588">
    <property type="entry name" value="TUBULIN"/>
    <property type="match status" value="1"/>
</dbReference>
<dbReference type="Pfam" id="PF00091">
    <property type="entry name" value="Tubulin"/>
    <property type="match status" value="1"/>
</dbReference>
<dbReference type="Pfam" id="PF03953">
    <property type="entry name" value="Tubulin_C"/>
    <property type="match status" value="1"/>
</dbReference>
<dbReference type="PRINTS" id="PR01163">
    <property type="entry name" value="BETATUBULIN"/>
</dbReference>
<dbReference type="PRINTS" id="PR01161">
    <property type="entry name" value="TUBULIN"/>
</dbReference>
<dbReference type="SMART" id="SM00864">
    <property type="entry name" value="Tubulin"/>
    <property type="match status" value="1"/>
</dbReference>
<dbReference type="SMART" id="SM00865">
    <property type="entry name" value="Tubulin_C"/>
    <property type="match status" value="1"/>
</dbReference>
<dbReference type="SUPFAM" id="SSF55307">
    <property type="entry name" value="Tubulin C-terminal domain-like"/>
    <property type="match status" value="1"/>
</dbReference>
<dbReference type="SUPFAM" id="SSF52490">
    <property type="entry name" value="Tubulin nucleotide-binding domain-like"/>
    <property type="match status" value="1"/>
</dbReference>
<dbReference type="PROSITE" id="PS00227">
    <property type="entry name" value="TUBULIN"/>
    <property type="match status" value="1"/>
</dbReference>
<dbReference type="PROSITE" id="PS00228">
    <property type="entry name" value="TUBULIN_B_AUTOREG"/>
    <property type="match status" value="1"/>
</dbReference>
<proteinExistence type="inferred from homology"/>
<accession>O04386</accession>
<keyword id="KW-0963">Cytoplasm</keyword>
<keyword id="KW-0206">Cytoskeleton</keyword>
<keyword id="KW-0342">GTP-binding</keyword>
<keyword id="KW-0460">Magnesium</keyword>
<keyword id="KW-0479">Metal-binding</keyword>
<keyword id="KW-0493">Microtubule</keyword>
<keyword id="KW-0547">Nucleotide-binding</keyword>
<protein>
    <recommendedName>
        <fullName>Tubulin beta chain</fullName>
    </recommendedName>
    <alternativeName>
        <fullName>Beta-tubulin</fullName>
    </alternativeName>
</protein>
<comment type="function">
    <text>Tubulin is the major constituent of microtubules, a cylinder consisting of laterally associated linear protofilaments composed of alpha- and beta-tubulin heterodimers. Microtubules grow by the addition of GTP-tubulin dimers to the microtubule end, where a stabilizing cap forms. Below the cap, tubulin dimers are in GDP-bound state, owing to GTPase activity of alpha-tubulin.</text>
</comment>
<comment type="cofactor">
    <cofactor evidence="1">
        <name>Mg(2+)</name>
        <dbReference type="ChEBI" id="CHEBI:18420"/>
    </cofactor>
</comment>
<comment type="subunit">
    <text>Dimer of alpha and beta chains. A typical microtubule is a hollow water-filled tube with an outer diameter of 25 nm and an inner diameter of 15 nM. Alpha-beta heterodimers associate head-to-tail to form protofilaments running lengthwise along the microtubule wall with the beta-tubulin subunit facing the microtubule plus end conferring a structural polarity. Microtubules usually have 13 protofilaments but different protofilament numbers can be found in some organisms and specialized cells.</text>
</comment>
<comment type="subcellular location">
    <subcellularLocation>
        <location>Cytoplasm</location>
        <location>Cytoskeleton</location>
    </subcellularLocation>
</comment>
<comment type="similarity">
    <text evidence="4">Belongs to the tubulin family.</text>
</comment>
<organism>
    <name type="scientific">Chlamydomonas incerta</name>
    <dbReference type="NCBI Taxonomy" id="51695"/>
    <lineage>
        <taxon>Eukaryota</taxon>
        <taxon>Viridiplantae</taxon>
        <taxon>Chlorophyta</taxon>
        <taxon>core chlorophytes</taxon>
        <taxon>Chlorophyceae</taxon>
        <taxon>CS clade</taxon>
        <taxon>Chlamydomonadales</taxon>
        <taxon>Chlamydomonadaceae</taxon>
        <taxon>Chlamydomonas</taxon>
    </lineage>
</organism>